<keyword id="KW-0143">Chaperone</keyword>
<keyword id="KW-0963">Cytoplasm</keyword>
<gene>
    <name evidence="1" type="primary">torD</name>
    <name type="ordered locus">VV2304</name>
</gene>
<feature type="chain" id="PRO_0000211648" description="Chaperone protein TorD">
    <location>
        <begin position="1"/>
        <end position="215"/>
    </location>
</feature>
<dbReference type="EMBL" id="BA000037">
    <property type="protein sequence ID" value="BAC95068.1"/>
    <property type="molecule type" value="Genomic_DNA"/>
</dbReference>
<dbReference type="SMR" id="Q7MJ58"/>
<dbReference type="STRING" id="672.VV93_v1c20160"/>
<dbReference type="KEGG" id="vvy:VV2304"/>
<dbReference type="eggNOG" id="COG3381">
    <property type="taxonomic scope" value="Bacteria"/>
</dbReference>
<dbReference type="HOGENOM" id="CLU_077650_4_0_6"/>
<dbReference type="Proteomes" id="UP000002675">
    <property type="component" value="Chromosome I"/>
</dbReference>
<dbReference type="GO" id="GO:0005737">
    <property type="term" value="C:cytoplasm"/>
    <property type="evidence" value="ECO:0007669"/>
    <property type="project" value="UniProtKB-SubCell"/>
</dbReference>
<dbReference type="GO" id="GO:0051259">
    <property type="term" value="P:protein complex oligomerization"/>
    <property type="evidence" value="ECO:0007669"/>
    <property type="project" value="InterPro"/>
</dbReference>
<dbReference type="GO" id="GO:0006457">
    <property type="term" value="P:protein folding"/>
    <property type="evidence" value="ECO:0007669"/>
    <property type="project" value="UniProtKB-UniRule"/>
</dbReference>
<dbReference type="Gene3D" id="1.20.120.1820">
    <property type="match status" value="1"/>
</dbReference>
<dbReference type="Gene3D" id="1.20.1280.20">
    <property type="entry name" value="HscB, C-terminal domain"/>
    <property type="match status" value="1"/>
</dbReference>
<dbReference type="HAMAP" id="MF_01150">
    <property type="entry name" value="TorD"/>
    <property type="match status" value="1"/>
</dbReference>
<dbReference type="InterPro" id="IPR023069">
    <property type="entry name" value="Chaperone_TorD"/>
</dbReference>
<dbReference type="InterPro" id="IPR020945">
    <property type="entry name" value="DMSO/NO3_reduct_chaperone"/>
</dbReference>
<dbReference type="InterPro" id="IPR036386">
    <property type="entry name" value="HscB_C_sf"/>
</dbReference>
<dbReference type="InterPro" id="IPR036411">
    <property type="entry name" value="TorD-like_sf"/>
</dbReference>
<dbReference type="InterPro" id="IPR050289">
    <property type="entry name" value="TorD/DmsD_chaperones"/>
</dbReference>
<dbReference type="NCBIfam" id="NF003442">
    <property type="entry name" value="PRK04976.1"/>
    <property type="match status" value="1"/>
</dbReference>
<dbReference type="PANTHER" id="PTHR34227:SF11">
    <property type="entry name" value="CHAPERONE PROTEIN TORD"/>
    <property type="match status" value="1"/>
</dbReference>
<dbReference type="PANTHER" id="PTHR34227">
    <property type="entry name" value="CHAPERONE PROTEIN YCDY"/>
    <property type="match status" value="1"/>
</dbReference>
<dbReference type="Pfam" id="PF02613">
    <property type="entry name" value="Nitrate_red_del"/>
    <property type="match status" value="1"/>
</dbReference>
<dbReference type="SUPFAM" id="SSF89155">
    <property type="entry name" value="TorD-like"/>
    <property type="match status" value="1"/>
</dbReference>
<reference key="1">
    <citation type="journal article" date="2003" name="Genome Res.">
        <title>Comparative genome analysis of Vibrio vulnificus, a marine pathogen.</title>
        <authorList>
            <person name="Chen C.-Y."/>
            <person name="Wu K.-M."/>
            <person name="Chang Y.-C."/>
            <person name="Chang C.-H."/>
            <person name="Tsai H.-C."/>
            <person name="Liao T.-L."/>
            <person name="Liu Y.-M."/>
            <person name="Chen H.-J."/>
            <person name="Shen A.B.-T."/>
            <person name="Li J.-C."/>
            <person name="Su T.-L."/>
            <person name="Shao C.-P."/>
            <person name="Lee C.-T."/>
            <person name="Hor L.-I."/>
            <person name="Tsai S.-F."/>
        </authorList>
    </citation>
    <scope>NUCLEOTIDE SEQUENCE [LARGE SCALE GENOMIC DNA]</scope>
    <source>
        <strain>YJ016</strain>
    </source>
</reference>
<proteinExistence type="inferred from homology"/>
<sequence length="215" mass="24726">MMQEIKAFNEKRAEIYWWLSSLFAKELTQEELDKYQSMEIRAFLTGLAENDALRPSVNAFVDALNRLVDRQDAQLELAADFCDLFLKTAKHGALPYASIYLTKDGLLNGEPAQKMDAWLKKHGVQVNQQLNEPADHLAIMLDFLGNLIIRSNELEQDRHMEEAFIEQNAFIQEMLLSWLPSFSQRAAEYDEFGFYNSAIKLLVAFCMLDSDYLVG</sequence>
<name>TORD_VIBVY</name>
<organism>
    <name type="scientific">Vibrio vulnificus (strain YJ016)</name>
    <dbReference type="NCBI Taxonomy" id="196600"/>
    <lineage>
        <taxon>Bacteria</taxon>
        <taxon>Pseudomonadati</taxon>
        <taxon>Pseudomonadota</taxon>
        <taxon>Gammaproteobacteria</taxon>
        <taxon>Vibrionales</taxon>
        <taxon>Vibrionaceae</taxon>
        <taxon>Vibrio</taxon>
    </lineage>
</organism>
<accession>Q7MJ58</accession>
<evidence type="ECO:0000255" key="1">
    <source>
        <dbReference type="HAMAP-Rule" id="MF_01150"/>
    </source>
</evidence>
<protein>
    <recommendedName>
        <fullName evidence="1">Chaperone protein TorD</fullName>
    </recommendedName>
</protein>
<comment type="function">
    <text evidence="1">Involved in the biogenesis of TorA. Acts on TorA before the insertion of the molybdenum cofactor and, as a result, probably favors a conformation of the apoenzyme that is competent for acquiring the cofactor.</text>
</comment>
<comment type="subcellular location">
    <subcellularLocation>
        <location evidence="1">Cytoplasm</location>
    </subcellularLocation>
</comment>
<comment type="similarity">
    <text evidence="1">Belongs to the TorD/DmsD family. TorD subfamily.</text>
</comment>